<dbReference type="EC" id="2.4.1.-" evidence="2"/>
<dbReference type="EC" id="2.4.1.38" evidence="2"/>
<dbReference type="EC" id="2.4.1.90" evidence="2"/>
<dbReference type="EC" id="2.4.1.275"/>
<dbReference type="EMBL" id="BT020682">
    <property type="protein sequence ID" value="AAX08699.1"/>
    <property type="molecule type" value="mRNA"/>
</dbReference>
<dbReference type="EMBL" id="BT020868">
    <property type="protein sequence ID" value="AAX08885.1"/>
    <property type="molecule type" value="mRNA"/>
</dbReference>
<dbReference type="EMBL" id="BT020916">
    <property type="protein sequence ID" value="AAX08933.1"/>
    <property type="molecule type" value="mRNA"/>
</dbReference>
<dbReference type="EMBL" id="BT026158">
    <property type="protein sequence ID" value="ABG66997.1"/>
    <property type="molecule type" value="mRNA"/>
</dbReference>
<dbReference type="EMBL" id="BC123718">
    <property type="protein sequence ID" value="AAI23719.1"/>
    <property type="molecule type" value="mRNA"/>
</dbReference>
<dbReference type="RefSeq" id="NP_001015609.1">
    <property type="nucleotide sequence ID" value="NM_001015609.1"/>
</dbReference>
<dbReference type="RefSeq" id="XP_005203558.1">
    <property type="nucleotide sequence ID" value="XM_005203501.3"/>
</dbReference>
<dbReference type="RefSeq" id="XP_005203559.1">
    <property type="nucleotide sequence ID" value="XM_005203502.3"/>
</dbReference>
<dbReference type="RefSeq" id="XP_010801059.1">
    <property type="nucleotide sequence ID" value="XM_010802757.2"/>
</dbReference>
<dbReference type="SMR" id="Q5EA87"/>
<dbReference type="FunCoup" id="Q5EA87">
    <property type="interactions" value="3788"/>
</dbReference>
<dbReference type="STRING" id="9913.ENSBTAP00000058958"/>
<dbReference type="CAZy" id="GT7">
    <property type="family name" value="Glycosyltransferase Family 7"/>
</dbReference>
<dbReference type="GlyCosmos" id="Q5EA87">
    <property type="glycosylation" value="4 sites, No reported glycans"/>
</dbReference>
<dbReference type="GlyGen" id="Q5EA87">
    <property type="glycosylation" value="4 sites"/>
</dbReference>
<dbReference type="PaxDb" id="9913-ENSBTAP00000049355"/>
<dbReference type="GeneID" id="515771"/>
<dbReference type="KEGG" id="bta:515771"/>
<dbReference type="CTD" id="8703"/>
<dbReference type="eggNOG" id="KOG3916">
    <property type="taxonomic scope" value="Eukaryota"/>
</dbReference>
<dbReference type="HOGENOM" id="CLU_044391_1_2_1"/>
<dbReference type="InParanoid" id="Q5EA87"/>
<dbReference type="OrthoDB" id="10016069at2759"/>
<dbReference type="TreeFam" id="TF312834"/>
<dbReference type="UniPathway" id="UPA00378"/>
<dbReference type="Proteomes" id="UP000009136">
    <property type="component" value="Unplaced"/>
</dbReference>
<dbReference type="GO" id="GO:0005794">
    <property type="term" value="C:Golgi apparatus"/>
    <property type="evidence" value="ECO:0000318"/>
    <property type="project" value="GO_Central"/>
</dbReference>
<dbReference type="GO" id="GO:0032580">
    <property type="term" value="C:Golgi cisterna membrane"/>
    <property type="evidence" value="ECO:0007669"/>
    <property type="project" value="UniProtKB-SubCell"/>
</dbReference>
<dbReference type="GO" id="GO:0003831">
    <property type="term" value="F:beta-N-acetylglucosaminylglycopeptide beta-1,4-galactosyltransferase activity"/>
    <property type="evidence" value="ECO:0007669"/>
    <property type="project" value="UniProtKB-EC"/>
</dbReference>
<dbReference type="GO" id="GO:0008378">
    <property type="term" value="F:galactosyltransferase activity"/>
    <property type="evidence" value="ECO:0000318"/>
    <property type="project" value="GO_Central"/>
</dbReference>
<dbReference type="GO" id="GO:0046872">
    <property type="term" value="F:metal ion binding"/>
    <property type="evidence" value="ECO:0007669"/>
    <property type="project" value="UniProtKB-KW"/>
</dbReference>
<dbReference type="GO" id="GO:0003945">
    <property type="term" value="F:N-acetyllactosamine synthase activity"/>
    <property type="evidence" value="ECO:0007669"/>
    <property type="project" value="UniProtKB-EC"/>
</dbReference>
<dbReference type="GO" id="GO:0005975">
    <property type="term" value="P:carbohydrate metabolic process"/>
    <property type="evidence" value="ECO:0007669"/>
    <property type="project" value="InterPro"/>
</dbReference>
<dbReference type="GO" id="GO:0006682">
    <property type="term" value="P:galactosylceramide biosynthetic process"/>
    <property type="evidence" value="ECO:0000318"/>
    <property type="project" value="GO_Central"/>
</dbReference>
<dbReference type="GO" id="GO:0070085">
    <property type="term" value="P:glycosylation"/>
    <property type="evidence" value="ECO:0000318"/>
    <property type="project" value="GO_Central"/>
</dbReference>
<dbReference type="GO" id="GO:0006486">
    <property type="term" value="P:protein glycosylation"/>
    <property type="evidence" value="ECO:0007669"/>
    <property type="project" value="UniProtKB-UniPathway"/>
</dbReference>
<dbReference type="CDD" id="cd00899">
    <property type="entry name" value="b4GalT"/>
    <property type="match status" value="1"/>
</dbReference>
<dbReference type="FunFam" id="3.90.550.10:FF:000028">
    <property type="entry name" value="beta-1,4-galactosyltransferase 1"/>
    <property type="match status" value="1"/>
</dbReference>
<dbReference type="Gene3D" id="3.90.550.10">
    <property type="entry name" value="Spore Coat Polysaccharide Biosynthesis Protein SpsA, Chain A"/>
    <property type="match status" value="1"/>
</dbReference>
<dbReference type="InterPro" id="IPR003859">
    <property type="entry name" value="Galactosyl_T"/>
</dbReference>
<dbReference type="InterPro" id="IPR027791">
    <property type="entry name" value="Galactosyl_T_C"/>
</dbReference>
<dbReference type="InterPro" id="IPR027995">
    <property type="entry name" value="Galactosyl_T_N"/>
</dbReference>
<dbReference type="InterPro" id="IPR029044">
    <property type="entry name" value="Nucleotide-diphossugar_trans"/>
</dbReference>
<dbReference type="PANTHER" id="PTHR19300">
    <property type="entry name" value="BETA-1,4-GALACTOSYLTRANSFERASE"/>
    <property type="match status" value="1"/>
</dbReference>
<dbReference type="PANTHER" id="PTHR19300:SF33">
    <property type="entry name" value="BETA-1,4-GALACTOSYLTRANSFERASE 3"/>
    <property type="match status" value="1"/>
</dbReference>
<dbReference type="Pfam" id="PF02709">
    <property type="entry name" value="Glyco_transf_7C"/>
    <property type="match status" value="1"/>
</dbReference>
<dbReference type="Pfam" id="PF13733">
    <property type="entry name" value="Glyco_transf_7N"/>
    <property type="match status" value="1"/>
</dbReference>
<dbReference type="PRINTS" id="PR02050">
    <property type="entry name" value="B14GALTRFASE"/>
</dbReference>
<dbReference type="SUPFAM" id="SSF53448">
    <property type="entry name" value="Nucleotide-diphospho-sugar transferases"/>
    <property type="match status" value="1"/>
</dbReference>
<sequence>MLRRLLERPCTLALLVGSQLAVMMYLSLGGFRSLSALFGREQEPAFDYSHPHDVYSNLSHMPGAPVAPGGLPAPQGLPYCPKRSPLLVGPISVSFSPVPSLAEIVERNPRVEPGGRYRPARCEPRSRTAIIVPHRAREHHLRLLLYHLHPFLQRQQLAYGIYVIHQAGNGTFNRAKLLNVGVREALRDEEWDCLFLHDVDLLPENDHNLYVCDPRGPRHVAVAMNKFGYSLPYPQYFGGVSALTPDQYLKMNGFPNEYWGWGGEDDDIATRVRLAGMKISRPPTSVGHYKMVKHRGDKGNEENPHRFDLLVRTQNSWTQDGMNSLTYQLLSRELGPLYTNITADIGTDPRGPRTSSGPHYPPGSSQAFRQEMLQRRPPARPGPLPTANHTAPHGSH</sequence>
<organism>
    <name type="scientific">Bos taurus</name>
    <name type="common">Bovine</name>
    <dbReference type="NCBI Taxonomy" id="9913"/>
    <lineage>
        <taxon>Eukaryota</taxon>
        <taxon>Metazoa</taxon>
        <taxon>Chordata</taxon>
        <taxon>Craniata</taxon>
        <taxon>Vertebrata</taxon>
        <taxon>Euteleostomi</taxon>
        <taxon>Mammalia</taxon>
        <taxon>Eutheria</taxon>
        <taxon>Laurasiatheria</taxon>
        <taxon>Artiodactyla</taxon>
        <taxon>Ruminantia</taxon>
        <taxon>Pecora</taxon>
        <taxon>Bovidae</taxon>
        <taxon>Bovinae</taxon>
        <taxon>Bos</taxon>
    </lineage>
</organism>
<proteinExistence type="evidence at transcript level"/>
<comment type="function">
    <text evidence="2">Responsible for the synthesis of complex-type N-linked oligosaccharides in many glycoproteins as well as the carbohydrate moieties of glycolipids.</text>
</comment>
<comment type="catalytic activity">
    <reaction evidence="2">
        <text>an N-acetyl-beta-D-glucosaminyl derivative + UDP-alpha-D-galactose = a beta-D-galactosyl-(1-&gt;4)-N-acetyl-beta-D-glucosaminyl derivative + UDP + H(+)</text>
        <dbReference type="Rhea" id="RHEA:22932"/>
        <dbReference type="ChEBI" id="CHEBI:15378"/>
        <dbReference type="ChEBI" id="CHEBI:58223"/>
        <dbReference type="ChEBI" id="CHEBI:61631"/>
        <dbReference type="ChEBI" id="CHEBI:66914"/>
        <dbReference type="ChEBI" id="CHEBI:133507"/>
        <dbReference type="EC" id="2.4.1.38"/>
    </reaction>
    <physiologicalReaction direction="left-to-right" evidence="2">
        <dbReference type="Rhea" id="RHEA:22933"/>
    </physiologicalReaction>
</comment>
<comment type="catalytic activity">
    <reaction evidence="2">
        <text>N-acetyl-D-glucosamine + UDP-alpha-D-galactose = beta-D-galactosyl-(1-&gt;4)-N-acetyl-D-glucosamine + UDP + H(+)</text>
        <dbReference type="Rhea" id="RHEA:17745"/>
        <dbReference type="ChEBI" id="CHEBI:15378"/>
        <dbReference type="ChEBI" id="CHEBI:58223"/>
        <dbReference type="ChEBI" id="CHEBI:60152"/>
        <dbReference type="ChEBI" id="CHEBI:66914"/>
        <dbReference type="ChEBI" id="CHEBI:506227"/>
        <dbReference type="EC" id="2.4.1.90"/>
    </reaction>
    <physiologicalReaction direction="left-to-right" evidence="2">
        <dbReference type="Rhea" id="RHEA:17746"/>
    </physiologicalReaction>
</comment>
<comment type="catalytic activity">
    <reaction evidence="2">
        <text>a beta-D-GlcNAc-(1-&gt;3)-beta-D-Gal-(1-&gt;4)-beta-D-Glc-(1&lt;-&gt;1)-Cer(d18:1(4E)) + UDP-alpha-D-galactose = a neolactoside nLc4Cer(d18:1(4E)) + UDP + H(+)</text>
        <dbReference type="Rhea" id="RHEA:31499"/>
        <dbReference type="ChEBI" id="CHEBI:15378"/>
        <dbReference type="ChEBI" id="CHEBI:17006"/>
        <dbReference type="ChEBI" id="CHEBI:17103"/>
        <dbReference type="ChEBI" id="CHEBI:58223"/>
        <dbReference type="ChEBI" id="CHEBI:66914"/>
        <dbReference type="EC" id="2.4.1.275"/>
    </reaction>
    <physiologicalReaction direction="left-to-right" evidence="2">
        <dbReference type="Rhea" id="RHEA:31500"/>
    </physiologicalReaction>
</comment>
<comment type="catalytic activity">
    <reaction evidence="2">
        <text>a beta-D-glucosylceramide + UDP-alpha-D-galactose = a beta-D-galactosyl-(1-&gt;4)-beta-D-glucosyl-(1&lt;-&gt;1)-ceramide + UDP + H(+)</text>
        <dbReference type="Rhea" id="RHEA:62552"/>
        <dbReference type="ChEBI" id="CHEBI:15378"/>
        <dbReference type="ChEBI" id="CHEBI:58223"/>
        <dbReference type="ChEBI" id="CHEBI:66914"/>
        <dbReference type="ChEBI" id="CHEBI:79208"/>
        <dbReference type="ChEBI" id="CHEBI:83264"/>
    </reaction>
    <physiologicalReaction direction="left-to-right" evidence="2">
        <dbReference type="Rhea" id="RHEA:62553"/>
    </physiologicalReaction>
</comment>
<comment type="catalytic activity">
    <reaction evidence="2">
        <text>a neolactoside IV(3)-beta-GlcNAc-nLc4Cer + UDP-alpha-D-galactose = a neolactoside nLc6Cer + UDP + H(+)</text>
        <dbReference type="Rhea" id="RHEA:62548"/>
        <dbReference type="ChEBI" id="CHEBI:15378"/>
        <dbReference type="ChEBI" id="CHEBI:58223"/>
        <dbReference type="ChEBI" id="CHEBI:66914"/>
        <dbReference type="ChEBI" id="CHEBI:90357"/>
        <dbReference type="ChEBI" id="CHEBI:144378"/>
    </reaction>
    <physiologicalReaction direction="left-to-right" evidence="2">
        <dbReference type="Rhea" id="RHEA:62549"/>
    </physiologicalReaction>
</comment>
<comment type="cofactor">
    <cofactor evidence="1">
        <name>Mn(2+)</name>
        <dbReference type="ChEBI" id="CHEBI:29035"/>
    </cofactor>
</comment>
<comment type="pathway">
    <text evidence="2">Protein modification; protein glycosylation.</text>
</comment>
<comment type="subcellular location">
    <subcellularLocation>
        <location evidence="1">Golgi apparatus</location>
        <location evidence="1">Golgi stack membrane</location>
        <topology evidence="1">Single-pass type II membrane protein</topology>
    </subcellularLocation>
    <text evidence="1">Trans cisternae of Golgi stack.</text>
</comment>
<comment type="similarity">
    <text evidence="5">Belongs to the glycosyltransferase 7 family.</text>
</comment>
<reference key="1">
    <citation type="journal article" date="2005" name="BMC Genomics">
        <title>Characterization of 954 bovine full-CDS cDNA sequences.</title>
        <authorList>
            <person name="Harhay G.P."/>
            <person name="Sonstegard T.S."/>
            <person name="Keele J.W."/>
            <person name="Heaton M.P."/>
            <person name="Clawson M.L."/>
            <person name="Snelling W.M."/>
            <person name="Wiedmann R.T."/>
            <person name="Van Tassell C.P."/>
            <person name="Smith T.P.L."/>
        </authorList>
    </citation>
    <scope>NUCLEOTIDE SEQUENCE [LARGE SCALE MRNA]</scope>
</reference>
<reference key="2">
    <citation type="submission" date="2006-09" db="EMBL/GenBank/DDBJ databases">
        <authorList>
            <consortium name="NIH - Mammalian Gene Collection (MGC) project"/>
        </authorList>
    </citation>
    <scope>NUCLEOTIDE SEQUENCE [LARGE SCALE MRNA]</scope>
    <source>
        <strain>Hereford</strain>
        <tissue>Brain cortex</tissue>
    </source>
</reference>
<protein>
    <recommendedName>
        <fullName>Beta-1,4-galactosyltransferase 3</fullName>
        <shortName>Beta-1,4-GalTase 3</shortName>
        <shortName>Beta4Gal-T3</shortName>
        <shortName>b4Gal-T3</shortName>
        <ecNumber evidence="2">2.4.1.-</ecNumber>
    </recommendedName>
    <alternativeName>
        <fullName>Beta-N-acetylglucosaminyl-glycolipid beta-1,4-galactosyltransferase</fullName>
    </alternativeName>
    <alternativeName>
        <fullName>Beta-N-acetylglucosaminylglycopeptide beta-1,4-galactosyltransferase</fullName>
        <ecNumber evidence="2">2.4.1.38</ecNumber>
    </alternativeName>
    <alternativeName>
        <fullName>N-acetyllactosamine synthase</fullName>
        <ecNumber evidence="2">2.4.1.90</ecNumber>
    </alternativeName>
    <alternativeName>
        <fullName>Nal synthase</fullName>
    </alternativeName>
    <alternativeName>
        <fullName>Neolactotriaosylceramide beta-1,4-galactosyltransferase</fullName>
        <ecNumber>2.4.1.275</ecNumber>
    </alternativeName>
    <alternativeName>
        <fullName>UDP-Gal:beta-GlcNAc beta-1,4-galactosyltransferase 3</fullName>
    </alternativeName>
    <alternativeName>
        <fullName>UDP-galactose:beta-N-acetylglucosamine beta-1,4-galactosyltransferase 3</fullName>
    </alternativeName>
</protein>
<evidence type="ECO:0000250" key="1"/>
<evidence type="ECO:0000250" key="2">
    <source>
        <dbReference type="UniProtKB" id="O60512"/>
    </source>
</evidence>
<evidence type="ECO:0000255" key="3"/>
<evidence type="ECO:0000256" key="4">
    <source>
        <dbReference type="SAM" id="MobiDB-lite"/>
    </source>
</evidence>
<evidence type="ECO:0000305" key="5"/>
<gene>
    <name type="primary">B4GALT3</name>
</gene>
<keyword id="KW-1015">Disulfide bond</keyword>
<keyword id="KW-0325">Glycoprotein</keyword>
<keyword id="KW-0328">Glycosyltransferase</keyword>
<keyword id="KW-0333">Golgi apparatus</keyword>
<keyword id="KW-0443">Lipid metabolism</keyword>
<keyword id="KW-0464">Manganese</keyword>
<keyword id="KW-0472">Membrane</keyword>
<keyword id="KW-0479">Metal-binding</keyword>
<keyword id="KW-1185">Reference proteome</keyword>
<keyword id="KW-0735">Signal-anchor</keyword>
<keyword id="KW-0808">Transferase</keyword>
<keyword id="KW-0812">Transmembrane</keyword>
<keyword id="KW-1133">Transmembrane helix</keyword>
<accession>Q5EA87</accession>
<accession>Q08DJ2</accession>
<accession>Q0V8R0</accession>
<accession>Q5E9K4</accession>
<name>B4GT3_BOVIN</name>
<feature type="chain" id="PRO_0000080535" description="Beta-1,4-galactosyltransferase 3">
    <location>
        <begin position="1"/>
        <end position="396"/>
    </location>
</feature>
<feature type="topological domain" description="Cytoplasmic" evidence="3">
    <location>
        <begin position="1"/>
        <end position="10"/>
    </location>
</feature>
<feature type="transmembrane region" description="Helical; Signal-anchor for type II membrane protein" evidence="3">
    <location>
        <begin position="11"/>
        <end position="31"/>
    </location>
</feature>
<feature type="topological domain" description="Lumenal" evidence="3">
    <location>
        <begin position="32"/>
        <end position="396"/>
    </location>
</feature>
<feature type="region of interest" description="Disordered" evidence="4">
    <location>
        <begin position="341"/>
        <end position="396"/>
    </location>
</feature>
<feature type="compositionally biased region" description="Polar residues" evidence="4">
    <location>
        <begin position="353"/>
        <end position="368"/>
    </location>
</feature>
<feature type="binding site" evidence="1">
    <location>
        <begin position="133"/>
        <end position="137"/>
    </location>
    <ligand>
        <name>UDP-alpha-D-galactose</name>
        <dbReference type="ChEBI" id="CHEBI:66914"/>
    </ligand>
</feature>
<feature type="binding site" evidence="1">
    <location>
        <begin position="172"/>
        <end position="174"/>
    </location>
    <ligand>
        <name>UDP-alpha-D-galactose</name>
        <dbReference type="ChEBI" id="CHEBI:66914"/>
    </ligand>
</feature>
<feature type="binding site" evidence="1">
    <location>
        <begin position="199"/>
        <end position="200"/>
    </location>
    <ligand>
        <name>UDP-alpha-D-galactose</name>
        <dbReference type="ChEBI" id="CHEBI:66914"/>
    </ligand>
</feature>
<feature type="binding site" evidence="1">
    <location>
        <position position="200"/>
    </location>
    <ligand>
        <name>Mn(2+)</name>
        <dbReference type="ChEBI" id="CHEBI:29035"/>
    </ligand>
</feature>
<feature type="binding site" evidence="1">
    <location>
        <position position="229"/>
    </location>
    <ligand>
        <name>UDP-alpha-D-galactose</name>
        <dbReference type="ChEBI" id="CHEBI:66914"/>
    </ligand>
</feature>
<feature type="binding site" evidence="1">
    <location>
        <position position="261"/>
    </location>
    <ligand>
        <name>UDP-alpha-D-galactose</name>
        <dbReference type="ChEBI" id="CHEBI:66914"/>
    </ligand>
</feature>
<feature type="binding site" evidence="1">
    <location>
        <begin position="263"/>
        <end position="266"/>
    </location>
    <ligand>
        <name>N-acetyl-D-glucosamine</name>
        <dbReference type="ChEBI" id="CHEBI:506227"/>
    </ligand>
</feature>
<feature type="binding site" evidence="1">
    <location>
        <begin position="294"/>
        <end position="296"/>
    </location>
    <ligand>
        <name>UDP-alpha-D-galactose</name>
        <dbReference type="ChEBI" id="CHEBI:66914"/>
    </ligand>
</feature>
<feature type="binding site" evidence="1">
    <location>
        <position position="294"/>
    </location>
    <ligand>
        <name>Mn(2+)</name>
        <dbReference type="ChEBI" id="CHEBI:29035"/>
    </ligand>
</feature>
<feature type="binding site" evidence="1">
    <location>
        <position position="306"/>
    </location>
    <ligand>
        <name>N-acetyl-D-glucosamine</name>
        <dbReference type="ChEBI" id="CHEBI:506227"/>
    </ligand>
</feature>
<feature type="glycosylation site" description="N-linked (GlcNAc...) asparagine" evidence="3">
    <location>
        <position position="57"/>
    </location>
</feature>
<feature type="glycosylation site" description="N-linked (GlcNAc...) asparagine" evidence="3">
    <location>
        <position position="169"/>
    </location>
</feature>
<feature type="glycosylation site" description="N-linked (GlcNAc...) asparagine" evidence="3">
    <location>
        <position position="340"/>
    </location>
</feature>
<feature type="glycosylation site" description="N-linked (GlcNAc...) asparagine" evidence="3">
    <location>
        <position position="388"/>
    </location>
</feature>
<feature type="disulfide bond" evidence="1">
    <location>
        <begin position="80"/>
        <end position="122"/>
    </location>
</feature>
<feature type="disulfide bond" evidence="1">
    <location>
        <begin position="193"/>
        <end position="212"/>
    </location>
</feature>
<feature type="sequence conflict" description="In Ref. 1; AAX08699 and 2; AAI23719." evidence="5" ref="1 2">
    <original>K</original>
    <variation>E</variation>
    <location>
        <position position="82"/>
    </location>
</feature>